<keyword id="KW-0472">Membrane</keyword>
<keyword id="KW-0520">NAD</keyword>
<keyword id="KW-0521">NADP</keyword>
<keyword id="KW-0618">Plastoquinone</keyword>
<keyword id="KW-0874">Quinone</keyword>
<keyword id="KW-1185">Reference proteome</keyword>
<keyword id="KW-0793">Thylakoid</keyword>
<keyword id="KW-1278">Translocase</keyword>
<keyword id="KW-0813">Transport</keyword>
<accession>A9BCX9</accession>
<protein>
    <recommendedName>
        <fullName evidence="1">NAD(P)H-quinone oxidoreductase subunit O</fullName>
        <ecNumber evidence="1">7.1.1.-</ecNumber>
    </recommendedName>
    <alternativeName>
        <fullName evidence="1">NAD(P)H dehydrogenase I subunit O</fullName>
    </alternativeName>
    <alternativeName>
        <fullName>NDH-1 subunit O</fullName>
    </alternativeName>
    <alternativeName>
        <fullName>NDH-O</fullName>
    </alternativeName>
</protein>
<sequence>MTDSSFSVPKPKPLKKGSLVLVNREAYESSLEALASDALPPQYIFEGPGEILMVKGDYAQVRWRRPVPDVWLRIDQLKAWAE</sequence>
<reference key="1">
    <citation type="journal article" date="2007" name="PLoS Genet.">
        <title>Patterns and implications of gene gain and loss in the evolution of Prochlorococcus.</title>
        <authorList>
            <person name="Kettler G.C."/>
            <person name="Martiny A.C."/>
            <person name="Huang K."/>
            <person name="Zucker J."/>
            <person name="Coleman M.L."/>
            <person name="Rodrigue S."/>
            <person name="Chen F."/>
            <person name="Lapidus A."/>
            <person name="Ferriera S."/>
            <person name="Johnson J."/>
            <person name="Steglich C."/>
            <person name="Church G.M."/>
            <person name="Richardson P."/>
            <person name="Chisholm S.W."/>
        </authorList>
    </citation>
    <scope>NUCLEOTIDE SEQUENCE [LARGE SCALE GENOMIC DNA]</scope>
    <source>
        <strain>MIT 9211</strain>
    </source>
</reference>
<dbReference type="EC" id="7.1.1.-" evidence="1"/>
<dbReference type="EMBL" id="CP000878">
    <property type="protein sequence ID" value="ABX08067.1"/>
    <property type="molecule type" value="Genomic_DNA"/>
</dbReference>
<dbReference type="RefSeq" id="WP_012194692.1">
    <property type="nucleotide sequence ID" value="NC_009976.1"/>
</dbReference>
<dbReference type="SMR" id="A9BCX9"/>
<dbReference type="STRING" id="93059.P9211_01361"/>
<dbReference type="KEGG" id="pmj:P9211_01361"/>
<dbReference type="eggNOG" id="ENOG5031XXZ">
    <property type="taxonomic scope" value="Bacteria"/>
</dbReference>
<dbReference type="HOGENOM" id="CLU_195299_0_0_3"/>
<dbReference type="OrthoDB" id="426633at2"/>
<dbReference type="Proteomes" id="UP000000788">
    <property type="component" value="Chromosome"/>
</dbReference>
<dbReference type="GO" id="GO:0031676">
    <property type="term" value="C:plasma membrane-derived thylakoid membrane"/>
    <property type="evidence" value="ECO:0007669"/>
    <property type="project" value="UniProtKB-SubCell"/>
</dbReference>
<dbReference type="GO" id="GO:0016655">
    <property type="term" value="F:oxidoreductase activity, acting on NAD(P)H, quinone or similar compound as acceptor"/>
    <property type="evidence" value="ECO:0007669"/>
    <property type="project" value="UniProtKB-UniRule"/>
</dbReference>
<dbReference type="GO" id="GO:0048038">
    <property type="term" value="F:quinone binding"/>
    <property type="evidence" value="ECO:0007669"/>
    <property type="project" value="UniProtKB-KW"/>
</dbReference>
<dbReference type="HAMAP" id="MF_01354">
    <property type="entry name" value="NDH1_NDH1O"/>
    <property type="match status" value="1"/>
</dbReference>
<dbReference type="InterPro" id="IPR020905">
    <property type="entry name" value="NdhO"/>
</dbReference>
<dbReference type="Pfam" id="PF11910">
    <property type="entry name" value="NdhO"/>
    <property type="match status" value="1"/>
</dbReference>
<name>NDHO_PROM4</name>
<organism>
    <name type="scientific">Prochlorococcus marinus (strain MIT 9211)</name>
    <dbReference type="NCBI Taxonomy" id="93059"/>
    <lineage>
        <taxon>Bacteria</taxon>
        <taxon>Bacillati</taxon>
        <taxon>Cyanobacteriota</taxon>
        <taxon>Cyanophyceae</taxon>
        <taxon>Synechococcales</taxon>
        <taxon>Prochlorococcaceae</taxon>
        <taxon>Prochlorococcus</taxon>
    </lineage>
</organism>
<evidence type="ECO:0000255" key="1">
    <source>
        <dbReference type="HAMAP-Rule" id="MF_01354"/>
    </source>
</evidence>
<proteinExistence type="inferred from homology"/>
<gene>
    <name evidence="1" type="primary">ndhO</name>
    <name type="ordered locus">P9211_01361</name>
</gene>
<feature type="chain" id="PRO_0000353640" description="NAD(P)H-quinone oxidoreductase subunit O">
    <location>
        <begin position="1"/>
        <end position="82"/>
    </location>
</feature>
<comment type="function">
    <text evidence="1">NDH-1 shuttles electrons from an unknown electron donor, via FMN and iron-sulfur (Fe-S) centers, to quinones in the respiratory and/or the photosynthetic chain. The immediate electron acceptor for the enzyme in this species is believed to be plastoquinone. Couples the redox reaction to proton translocation, and thus conserves the redox energy in a proton gradient. Cyanobacterial NDH-1 also plays a role in inorganic carbon-concentration.</text>
</comment>
<comment type="catalytic activity">
    <reaction evidence="1">
        <text>a plastoquinone + NADH + (n+1) H(+)(in) = a plastoquinol + NAD(+) + n H(+)(out)</text>
        <dbReference type="Rhea" id="RHEA:42608"/>
        <dbReference type="Rhea" id="RHEA-COMP:9561"/>
        <dbReference type="Rhea" id="RHEA-COMP:9562"/>
        <dbReference type="ChEBI" id="CHEBI:15378"/>
        <dbReference type="ChEBI" id="CHEBI:17757"/>
        <dbReference type="ChEBI" id="CHEBI:57540"/>
        <dbReference type="ChEBI" id="CHEBI:57945"/>
        <dbReference type="ChEBI" id="CHEBI:62192"/>
    </reaction>
</comment>
<comment type="catalytic activity">
    <reaction evidence="1">
        <text>a plastoquinone + NADPH + (n+1) H(+)(in) = a plastoquinol + NADP(+) + n H(+)(out)</text>
        <dbReference type="Rhea" id="RHEA:42612"/>
        <dbReference type="Rhea" id="RHEA-COMP:9561"/>
        <dbReference type="Rhea" id="RHEA-COMP:9562"/>
        <dbReference type="ChEBI" id="CHEBI:15378"/>
        <dbReference type="ChEBI" id="CHEBI:17757"/>
        <dbReference type="ChEBI" id="CHEBI:57783"/>
        <dbReference type="ChEBI" id="CHEBI:58349"/>
        <dbReference type="ChEBI" id="CHEBI:62192"/>
    </reaction>
</comment>
<comment type="subunit">
    <text evidence="1">NDH-1 can be composed of about 15 different subunits; different subcomplexes with different compositions have been identified which probably have different functions.</text>
</comment>
<comment type="subcellular location">
    <subcellularLocation>
        <location evidence="1">Cellular thylakoid membrane</location>
        <topology evidence="1">Peripheral membrane protein</topology>
        <orientation evidence="1">Cytoplasmic side</orientation>
    </subcellularLocation>
</comment>
<comment type="similarity">
    <text evidence="1">Belongs to the complex I NdhO subunit family.</text>
</comment>